<name>HEM1_PROMP</name>
<proteinExistence type="inferred from homology"/>
<protein>
    <recommendedName>
        <fullName evidence="1">Glutamyl-tRNA reductase</fullName>
        <shortName evidence="1">GluTR</shortName>
        <ecNumber evidence="1">1.2.1.70</ecNumber>
    </recommendedName>
</protein>
<comment type="function">
    <text evidence="1">Catalyzes the NADPH-dependent reduction of glutamyl-tRNA(Glu) to glutamate 1-semialdehyde (GSA).</text>
</comment>
<comment type="catalytic activity">
    <reaction evidence="1">
        <text>(S)-4-amino-5-oxopentanoate + tRNA(Glu) + NADP(+) = L-glutamyl-tRNA(Glu) + NADPH + H(+)</text>
        <dbReference type="Rhea" id="RHEA:12344"/>
        <dbReference type="Rhea" id="RHEA-COMP:9663"/>
        <dbReference type="Rhea" id="RHEA-COMP:9680"/>
        <dbReference type="ChEBI" id="CHEBI:15378"/>
        <dbReference type="ChEBI" id="CHEBI:57501"/>
        <dbReference type="ChEBI" id="CHEBI:57783"/>
        <dbReference type="ChEBI" id="CHEBI:58349"/>
        <dbReference type="ChEBI" id="CHEBI:78442"/>
        <dbReference type="ChEBI" id="CHEBI:78520"/>
        <dbReference type="EC" id="1.2.1.70"/>
    </reaction>
</comment>
<comment type="pathway">
    <text evidence="1">Porphyrin-containing compound metabolism; protoporphyrin-IX biosynthesis; 5-aminolevulinate from L-glutamyl-tRNA(Glu): step 1/2.</text>
</comment>
<comment type="pathway">
    <text evidence="1">Porphyrin-containing compound metabolism; chlorophyll biosynthesis.</text>
</comment>
<comment type="subunit">
    <text evidence="1">Homodimer.</text>
</comment>
<comment type="domain">
    <text evidence="1">Possesses an unusual extended V-shaped dimeric structure with each monomer consisting of three distinct domains arranged along a curved 'spinal' alpha-helix. The N-terminal catalytic domain specifically recognizes the glutamate moiety of the substrate. The second domain is the NADPH-binding domain, and the third C-terminal domain is responsible for dimerization.</text>
</comment>
<comment type="miscellaneous">
    <text evidence="1">During catalysis, the active site Cys acts as a nucleophile attacking the alpha-carbonyl group of tRNA-bound glutamate with the formation of a thioester intermediate between enzyme and glutamate, and the concomitant release of tRNA(Glu). The thioester intermediate is finally reduced by direct hydride transfer from NADPH, to form the product GSA.</text>
</comment>
<comment type="similarity">
    <text evidence="1">Belongs to the glutamyl-tRNA reductase family.</text>
</comment>
<accession>Q7V1T7</accession>
<reference key="1">
    <citation type="journal article" date="2003" name="Nature">
        <title>Genome divergence in two Prochlorococcus ecotypes reflects oceanic niche differentiation.</title>
        <authorList>
            <person name="Rocap G."/>
            <person name="Larimer F.W."/>
            <person name="Lamerdin J.E."/>
            <person name="Malfatti S."/>
            <person name="Chain P."/>
            <person name="Ahlgren N.A."/>
            <person name="Arellano A."/>
            <person name="Coleman M."/>
            <person name="Hauser L."/>
            <person name="Hess W.R."/>
            <person name="Johnson Z.I."/>
            <person name="Land M.L."/>
            <person name="Lindell D."/>
            <person name="Post A.F."/>
            <person name="Regala W."/>
            <person name="Shah M."/>
            <person name="Shaw S.L."/>
            <person name="Steglich C."/>
            <person name="Sullivan M.B."/>
            <person name="Ting C.S."/>
            <person name="Tolonen A."/>
            <person name="Webb E.A."/>
            <person name="Zinser E.R."/>
            <person name="Chisholm S.W."/>
        </authorList>
    </citation>
    <scope>NUCLEOTIDE SEQUENCE [LARGE SCALE GENOMIC DNA]</scope>
    <source>
        <strain>CCMP1986 / NIES-2087 / MED4</strain>
    </source>
</reference>
<evidence type="ECO:0000255" key="1">
    <source>
        <dbReference type="HAMAP-Rule" id="MF_00087"/>
    </source>
</evidence>
<organism>
    <name type="scientific">Prochlorococcus marinus subsp. pastoris (strain CCMP1986 / NIES-2087 / MED4)</name>
    <dbReference type="NCBI Taxonomy" id="59919"/>
    <lineage>
        <taxon>Bacteria</taxon>
        <taxon>Bacillati</taxon>
        <taxon>Cyanobacteriota</taxon>
        <taxon>Cyanophyceae</taxon>
        <taxon>Synechococcales</taxon>
        <taxon>Prochlorococcaceae</taxon>
        <taxon>Prochlorococcus</taxon>
    </lineage>
</organism>
<sequence length="433" mass="48289">MHIVVVGLSHRTAPVEVREKLSIPDQSISESLKTLSINSDILEVSILSTCNRLEIYALVKEINIGISSIKEFLTDYSSVNFEDLNPHLFDFRQEEAVLHLMKVSAGLDSLVLGEGQILSQVKKMMRLGQENQSTGPILNRLLSQSVSAGKKVRSETNLGTGAVSISSAAVELAQLKIGQDHGVDGLVSLKSEKVLVVGAGRMSRLLITHLKSKGCNRLTLLNRNIERAVNLAGDFPDLEINCKSLNELDKNISLSSLVFTSTASEKPFIDLARVEKISLNNKLKFIDIGVPRNISNDVKHHAFIESFDVDDLEEVVSRNQEFRQKIAKEAESLVKDERIIFLEWWASLEAVPVINKLRSDLELIRKEELQKALSRMGPDFSARERKVVEALTKGIINKILHTPVTKLRSPQSRDERQASLKIVEKLFSLVDDE</sequence>
<keyword id="KW-0149">Chlorophyll biosynthesis</keyword>
<keyword id="KW-0521">NADP</keyword>
<keyword id="KW-0560">Oxidoreductase</keyword>
<keyword id="KW-0627">Porphyrin biosynthesis</keyword>
<dbReference type="EC" id="1.2.1.70" evidence="1"/>
<dbReference type="EMBL" id="BX548174">
    <property type="protein sequence ID" value="CAE19227.1"/>
    <property type="molecule type" value="Genomic_DNA"/>
</dbReference>
<dbReference type="RefSeq" id="WP_011132402.1">
    <property type="nucleotide sequence ID" value="NC_005072.1"/>
</dbReference>
<dbReference type="SMR" id="Q7V1T7"/>
<dbReference type="STRING" id="59919.PMM0768"/>
<dbReference type="KEGG" id="pmm:PMM0768"/>
<dbReference type="eggNOG" id="COG0373">
    <property type="taxonomic scope" value="Bacteria"/>
</dbReference>
<dbReference type="HOGENOM" id="CLU_035113_2_1_3"/>
<dbReference type="OrthoDB" id="110209at2"/>
<dbReference type="UniPathway" id="UPA00251">
    <property type="reaction ID" value="UER00316"/>
</dbReference>
<dbReference type="UniPathway" id="UPA00668"/>
<dbReference type="Proteomes" id="UP000001026">
    <property type="component" value="Chromosome"/>
</dbReference>
<dbReference type="GO" id="GO:0008883">
    <property type="term" value="F:glutamyl-tRNA reductase activity"/>
    <property type="evidence" value="ECO:0007669"/>
    <property type="project" value="UniProtKB-UniRule"/>
</dbReference>
<dbReference type="GO" id="GO:0050661">
    <property type="term" value="F:NADP binding"/>
    <property type="evidence" value="ECO:0007669"/>
    <property type="project" value="InterPro"/>
</dbReference>
<dbReference type="GO" id="GO:0015995">
    <property type="term" value="P:chlorophyll biosynthetic process"/>
    <property type="evidence" value="ECO:0007669"/>
    <property type="project" value="UniProtKB-UniRule"/>
</dbReference>
<dbReference type="GO" id="GO:0006782">
    <property type="term" value="P:protoporphyrinogen IX biosynthetic process"/>
    <property type="evidence" value="ECO:0007669"/>
    <property type="project" value="UniProtKB-UniRule"/>
</dbReference>
<dbReference type="CDD" id="cd05213">
    <property type="entry name" value="NAD_bind_Glutamyl_tRNA_reduct"/>
    <property type="match status" value="1"/>
</dbReference>
<dbReference type="FunFam" id="3.30.460.30:FF:000001">
    <property type="entry name" value="Glutamyl-tRNA reductase"/>
    <property type="match status" value="1"/>
</dbReference>
<dbReference type="Gene3D" id="3.30.460.30">
    <property type="entry name" value="Glutamyl-tRNA reductase, N-terminal domain"/>
    <property type="match status" value="1"/>
</dbReference>
<dbReference type="Gene3D" id="3.40.50.720">
    <property type="entry name" value="NAD(P)-binding Rossmann-like Domain"/>
    <property type="match status" value="1"/>
</dbReference>
<dbReference type="HAMAP" id="MF_00087">
    <property type="entry name" value="Glu_tRNA_reductase"/>
    <property type="match status" value="1"/>
</dbReference>
<dbReference type="InterPro" id="IPR000343">
    <property type="entry name" value="4pyrrol_synth_GluRdtase"/>
</dbReference>
<dbReference type="InterPro" id="IPR015896">
    <property type="entry name" value="4pyrrol_synth_GluRdtase_dimer"/>
</dbReference>
<dbReference type="InterPro" id="IPR015895">
    <property type="entry name" value="4pyrrol_synth_GluRdtase_N"/>
</dbReference>
<dbReference type="InterPro" id="IPR018214">
    <property type="entry name" value="GluRdtase_CS"/>
</dbReference>
<dbReference type="InterPro" id="IPR036453">
    <property type="entry name" value="GluRdtase_dimer_dom_sf"/>
</dbReference>
<dbReference type="InterPro" id="IPR036343">
    <property type="entry name" value="GluRdtase_N_sf"/>
</dbReference>
<dbReference type="InterPro" id="IPR036291">
    <property type="entry name" value="NAD(P)-bd_dom_sf"/>
</dbReference>
<dbReference type="InterPro" id="IPR006151">
    <property type="entry name" value="Shikm_DH/Glu-tRNA_Rdtase"/>
</dbReference>
<dbReference type="NCBIfam" id="TIGR01035">
    <property type="entry name" value="hemA"/>
    <property type="match status" value="1"/>
</dbReference>
<dbReference type="NCBIfam" id="NF000744">
    <property type="entry name" value="PRK00045.1-3"/>
    <property type="match status" value="1"/>
</dbReference>
<dbReference type="PANTHER" id="PTHR43120">
    <property type="entry name" value="GLUTAMYL-TRNA REDUCTASE 1, CHLOROPLASTIC"/>
    <property type="match status" value="1"/>
</dbReference>
<dbReference type="PANTHER" id="PTHR43120:SF1">
    <property type="entry name" value="GLUTAMYL-TRNA REDUCTASE 1, CHLOROPLASTIC"/>
    <property type="match status" value="1"/>
</dbReference>
<dbReference type="Pfam" id="PF00745">
    <property type="entry name" value="GlutR_dimer"/>
    <property type="match status" value="1"/>
</dbReference>
<dbReference type="Pfam" id="PF05201">
    <property type="entry name" value="GlutR_N"/>
    <property type="match status" value="1"/>
</dbReference>
<dbReference type="Pfam" id="PF01488">
    <property type="entry name" value="Shikimate_DH"/>
    <property type="match status" value="1"/>
</dbReference>
<dbReference type="PIRSF" id="PIRSF000445">
    <property type="entry name" value="4pyrrol_synth_GluRdtase"/>
    <property type="match status" value="1"/>
</dbReference>
<dbReference type="SUPFAM" id="SSF69742">
    <property type="entry name" value="Glutamyl tRNA-reductase catalytic, N-terminal domain"/>
    <property type="match status" value="1"/>
</dbReference>
<dbReference type="SUPFAM" id="SSF69075">
    <property type="entry name" value="Glutamyl tRNA-reductase dimerization domain"/>
    <property type="match status" value="1"/>
</dbReference>
<dbReference type="SUPFAM" id="SSF51735">
    <property type="entry name" value="NAD(P)-binding Rossmann-fold domains"/>
    <property type="match status" value="1"/>
</dbReference>
<dbReference type="PROSITE" id="PS00747">
    <property type="entry name" value="GLUTR"/>
    <property type="match status" value="1"/>
</dbReference>
<feature type="chain" id="PRO_0000114057" description="Glutamyl-tRNA reductase">
    <location>
        <begin position="1"/>
        <end position="433"/>
    </location>
</feature>
<feature type="active site" description="Nucleophile" evidence="1">
    <location>
        <position position="50"/>
    </location>
</feature>
<feature type="binding site" evidence="1">
    <location>
        <begin position="49"/>
        <end position="52"/>
    </location>
    <ligand>
        <name>substrate</name>
    </ligand>
</feature>
<feature type="binding site" evidence="1">
    <location>
        <position position="109"/>
    </location>
    <ligand>
        <name>substrate</name>
    </ligand>
</feature>
<feature type="binding site" evidence="1">
    <location>
        <begin position="114"/>
        <end position="116"/>
    </location>
    <ligand>
        <name>substrate</name>
    </ligand>
</feature>
<feature type="binding site" evidence="1">
    <location>
        <position position="120"/>
    </location>
    <ligand>
        <name>substrate</name>
    </ligand>
</feature>
<feature type="binding site" evidence="1">
    <location>
        <begin position="198"/>
        <end position="203"/>
    </location>
    <ligand>
        <name>NADP(+)</name>
        <dbReference type="ChEBI" id="CHEBI:58349"/>
    </ligand>
</feature>
<feature type="site" description="Important for activity" evidence="1">
    <location>
        <position position="99"/>
    </location>
</feature>
<gene>
    <name evidence="1" type="primary">hemA</name>
    <name type="ordered locus">PMM0768</name>
</gene>